<evidence type="ECO:0000250" key="1"/>
<evidence type="ECO:0000255" key="2">
    <source>
        <dbReference type="PROSITE-ProRule" id="PRU00285"/>
    </source>
</evidence>
<feature type="chain" id="PRO_0000125923" description="Alpha-crystallin B chain">
    <location>
        <begin position="1" status="less than"/>
        <end position="52" status="greater than"/>
    </location>
</feature>
<feature type="non-terminal residue">
    <location>
        <position position="1"/>
    </location>
</feature>
<feature type="non-terminal residue">
    <location>
        <position position="52"/>
    </location>
</feature>
<name>CRYAB_TURME</name>
<comment type="function">
    <text>May contribute to the transparency and refractive index of the lens.</text>
</comment>
<comment type="subunit">
    <text evidence="1">Homodimer. Aggregates with homologous proteins, including alpha-A-crystallin and the small heat shock protein HSPB1, to form large heteromeric complexes (By similarity).</text>
</comment>
<comment type="similarity">
    <text evidence="2">Belongs to the small heat shock protein (HSP20) family.</text>
</comment>
<accession>O12995</accession>
<dbReference type="EMBL" id="X96595">
    <property type="protein sequence ID" value="CAA65413.1"/>
    <property type="molecule type" value="mRNA"/>
</dbReference>
<dbReference type="GO" id="GO:0042803">
    <property type="term" value="F:protein homodimerization activity"/>
    <property type="evidence" value="ECO:0000250"/>
    <property type="project" value="UniProtKB"/>
</dbReference>
<dbReference type="GO" id="GO:0005212">
    <property type="term" value="F:structural constituent of eye lens"/>
    <property type="evidence" value="ECO:0007669"/>
    <property type="project" value="UniProtKB-KW"/>
</dbReference>
<dbReference type="InterPro" id="IPR003090">
    <property type="entry name" value="Alpha-crystallin_N"/>
</dbReference>
<dbReference type="Pfam" id="PF00525">
    <property type="entry name" value="Crystallin"/>
    <property type="match status" value="1"/>
</dbReference>
<reference key="1">
    <citation type="journal article" date="1997" name="Mol. Phylogenet. Evol.">
        <title>Alpha-crystallin sequences support a galliform/anseriform clade.</title>
        <authorList>
            <person name="Caspers G.J."/>
            <person name="Uit de Weerd D."/>
            <person name="Wattel J."/>
            <person name="de Jong W.W."/>
        </authorList>
    </citation>
    <scope>NUCLEOTIDE SEQUENCE [MRNA]</scope>
</reference>
<protein>
    <recommendedName>
        <fullName>Alpha-crystallin B chain</fullName>
    </recommendedName>
    <alternativeName>
        <fullName>Alpha(B)-crystallin</fullName>
    </alternativeName>
</protein>
<proteinExistence type="evidence at transcript level"/>
<organism>
    <name type="scientific">Turdus merula</name>
    <name type="common">Common blackbird</name>
    <dbReference type="NCBI Taxonomy" id="9187"/>
    <lineage>
        <taxon>Eukaryota</taxon>
        <taxon>Metazoa</taxon>
        <taxon>Chordata</taxon>
        <taxon>Craniata</taxon>
        <taxon>Vertebrata</taxon>
        <taxon>Euteleostomi</taxon>
        <taxon>Archelosauria</taxon>
        <taxon>Archosauria</taxon>
        <taxon>Dinosauria</taxon>
        <taxon>Saurischia</taxon>
        <taxon>Theropoda</taxon>
        <taxon>Coelurosauria</taxon>
        <taxon>Aves</taxon>
        <taxon>Neognathae</taxon>
        <taxon>Neoaves</taxon>
        <taxon>Telluraves</taxon>
        <taxon>Australaves</taxon>
        <taxon>Passeriformes</taxon>
        <taxon>Turdidae</taxon>
        <taxon>Turdus</taxon>
    </lineage>
</organism>
<gene>
    <name type="primary">CRYAB</name>
</gene>
<sequence>LIRRPFFSWLAPSRIFDQIFGEHLPESELLPVSPSFSPFLMRSPILRMPSWL</sequence>
<keyword id="KW-0273">Eye lens protein</keyword>